<keyword id="KW-0067">ATP-binding</keyword>
<keyword id="KW-0237">DNA synthesis</keyword>
<keyword id="KW-0418">Kinase</keyword>
<keyword id="KW-0547">Nucleotide-binding</keyword>
<keyword id="KW-1185">Reference proteome</keyword>
<keyword id="KW-0808">Transferase</keyword>
<proteinExistence type="inferred from homology"/>
<organismHost>
    <name type="scientific">Ictaluridae</name>
    <name type="common">bullhead catfishes</name>
    <dbReference type="NCBI Taxonomy" id="7996"/>
</organismHost>
<dbReference type="EC" id="2.7.1.21"/>
<dbReference type="EMBL" id="M75136">
    <property type="protein sequence ID" value="AAA88186.1"/>
    <property type="molecule type" value="Genomic_DNA"/>
</dbReference>
<dbReference type="EMBL" id="M75136">
    <property type="protein sequence ID" value="AAA88108.1"/>
    <property type="molecule type" value="Genomic_DNA"/>
</dbReference>
<dbReference type="PIR" id="JQ1336">
    <property type="entry name" value="KIBEIC"/>
</dbReference>
<dbReference type="SMR" id="P28855"/>
<dbReference type="KEGG" id="vg:1488381"/>
<dbReference type="KEGG" id="vg:1488423"/>
<dbReference type="Proteomes" id="UP000007643">
    <property type="component" value="Segment"/>
</dbReference>
<dbReference type="GO" id="GO:0005524">
    <property type="term" value="F:ATP binding"/>
    <property type="evidence" value="ECO:0007669"/>
    <property type="project" value="UniProtKB-KW"/>
</dbReference>
<dbReference type="GO" id="GO:0004797">
    <property type="term" value="F:thymidine kinase activity"/>
    <property type="evidence" value="ECO:0007669"/>
    <property type="project" value="UniProtKB-EC"/>
</dbReference>
<dbReference type="GO" id="GO:0071897">
    <property type="term" value="P:DNA biosynthetic process"/>
    <property type="evidence" value="ECO:0007669"/>
    <property type="project" value="UniProtKB-KW"/>
</dbReference>
<dbReference type="Gene3D" id="3.40.50.300">
    <property type="entry name" value="P-loop containing nucleotide triphosphate hydrolases"/>
    <property type="match status" value="2"/>
</dbReference>
<dbReference type="InterPro" id="IPR050566">
    <property type="entry name" value="Deoxyribonucleoside_kinase"/>
</dbReference>
<dbReference type="InterPro" id="IPR031314">
    <property type="entry name" value="DNK_dom"/>
</dbReference>
<dbReference type="InterPro" id="IPR027417">
    <property type="entry name" value="P-loop_NTPase"/>
</dbReference>
<dbReference type="PANTHER" id="PTHR10513:SF35">
    <property type="entry name" value="DEOXYADENOSINE KINASE"/>
    <property type="match status" value="1"/>
</dbReference>
<dbReference type="PANTHER" id="PTHR10513">
    <property type="entry name" value="DEOXYNUCLEOSIDE KINASE"/>
    <property type="match status" value="1"/>
</dbReference>
<dbReference type="Pfam" id="PF01712">
    <property type="entry name" value="dNK"/>
    <property type="match status" value="1"/>
</dbReference>
<dbReference type="SUPFAM" id="SSF52540">
    <property type="entry name" value="P-loop containing nucleoside triphosphate hydrolases"/>
    <property type="match status" value="1"/>
</dbReference>
<comment type="catalytic activity">
    <reaction>
        <text>thymidine + ATP = dTMP + ADP + H(+)</text>
        <dbReference type="Rhea" id="RHEA:19129"/>
        <dbReference type="ChEBI" id="CHEBI:15378"/>
        <dbReference type="ChEBI" id="CHEBI:17748"/>
        <dbReference type="ChEBI" id="CHEBI:30616"/>
        <dbReference type="ChEBI" id="CHEBI:63528"/>
        <dbReference type="ChEBI" id="CHEBI:456216"/>
        <dbReference type="EC" id="2.7.1.21"/>
    </reaction>
</comment>
<comment type="similarity">
    <text evidence="3">Belongs to the DCK/DGK family.</text>
</comment>
<reference key="1">
    <citation type="journal article" date="1992" name="Virology">
        <title>Channel catfish virus: a new type of herpesvirus.</title>
        <authorList>
            <person name="Davison A.J."/>
        </authorList>
    </citation>
    <scope>NUCLEOTIDE SEQUENCE [LARGE SCALE GENOMIC DNA]</scope>
</reference>
<reference key="2">
    <citation type="journal article" date="1991" name="J. Gen. Virol.">
        <title>Evolution of herpesvirus thymidine kinases from cellular deoxycytidine kinase.</title>
        <authorList>
            <person name="Harrison P.T."/>
            <person name="Thompson R."/>
            <person name="Davison A.J."/>
        </authorList>
    </citation>
    <scope>DISCUSSION OF SEQUENCE</scope>
</reference>
<feature type="chain" id="PRO_0000175089" description="Thymidine kinase">
    <location>
        <begin position="1"/>
        <end position="228"/>
    </location>
</feature>
<feature type="active site" description="Proton acceptor" evidence="2">
    <location>
        <position position="50"/>
    </location>
</feature>
<feature type="binding site" evidence="1">
    <location>
        <begin position="23"/>
        <end position="30"/>
    </location>
    <ligand>
        <name>ATP</name>
        <dbReference type="ChEBI" id="CHEBI:30616"/>
    </ligand>
</feature>
<feature type="binding site" evidence="1">
    <location>
        <position position="68"/>
    </location>
    <ligand>
        <name>substrate</name>
    </ligand>
</feature>
<feature type="binding site" evidence="1">
    <location>
        <position position="79"/>
    </location>
    <ligand>
        <name>substrate</name>
    </ligand>
</feature>
<feature type="binding site" evidence="1">
    <location>
        <position position="109"/>
    </location>
    <ligand>
        <name>substrate</name>
    </ligand>
</feature>
<feature type="binding site" evidence="1">
    <location>
        <position position="157"/>
    </location>
    <ligand>
        <name>ATP</name>
        <dbReference type="ChEBI" id="CHEBI:30616"/>
    </ligand>
</feature>
<accession>P28855</accession>
<name>KITH_ICHVA</name>
<organism>
    <name type="scientific">Ictalurid herpesvirus 1 (strain Auburn)</name>
    <name type="common">IcHV-1</name>
    <name type="synonym">Channel catfish herpesvirus</name>
    <dbReference type="NCBI Taxonomy" id="766178"/>
    <lineage>
        <taxon>Viruses</taxon>
        <taxon>Duplodnaviria</taxon>
        <taxon>Heunggongvirae</taxon>
        <taxon>Peploviricota</taxon>
        <taxon>Herviviricetes</taxon>
        <taxon>Herpesvirales</taxon>
        <taxon>Alloherpesviridae</taxon>
        <taxon>Ictavirus</taxon>
        <taxon>Ictavirus ictaluridallo1</taxon>
        <taxon>Ictalurid herpesvirus 1</taxon>
    </lineage>
</organism>
<gene>
    <name type="primary">TK</name>
    <name type="synonym">5</name>
</gene>
<sequence length="228" mass="25642">MALREGPTPARFLPEGLVFCVEGNIGCGKSTLVKALMERVAGSGVNVVEEPVDQWVNHNGKNYLELSYTDPTGYAVPFQNLVFDSYVNVQRLQNPDIMERSPMSATRVFCAVNGSRGVIPATALPGMAARGEAVMRTIATRPVFVYLELPPEECLRRMRRRDRTGEAGVGLDYLRLLHERYEAWLSSAEDVERVDASRSREEIVDRVIEILCRRHPRLRAPLTRKSQL</sequence>
<protein>
    <recommendedName>
        <fullName>Thymidine kinase</fullName>
        <ecNumber>2.7.1.21</ecNumber>
    </recommendedName>
</protein>
<evidence type="ECO:0000250" key="1"/>
<evidence type="ECO:0000255" key="2"/>
<evidence type="ECO:0000305" key="3"/>